<protein>
    <recommendedName>
        <fullName evidence="1">Urease subunit beta</fullName>
        <ecNumber evidence="1">3.5.1.5</ecNumber>
    </recommendedName>
    <alternativeName>
        <fullName evidence="1">Urea amidohydrolase subunit beta</fullName>
    </alternativeName>
</protein>
<accession>B0C793</accession>
<feature type="chain" id="PRO_1000088502" description="Urease subunit beta">
    <location>
        <begin position="1"/>
        <end position="101"/>
    </location>
</feature>
<reference key="1">
    <citation type="journal article" date="2008" name="Proc. Natl. Acad. Sci. U.S.A.">
        <title>Niche adaptation and genome expansion in the chlorophyll d-producing cyanobacterium Acaryochloris marina.</title>
        <authorList>
            <person name="Swingley W.D."/>
            <person name="Chen M."/>
            <person name="Cheung P.C."/>
            <person name="Conrad A.L."/>
            <person name="Dejesa L.C."/>
            <person name="Hao J."/>
            <person name="Honchak B.M."/>
            <person name="Karbach L.E."/>
            <person name="Kurdoglu A."/>
            <person name="Lahiri S."/>
            <person name="Mastrian S.D."/>
            <person name="Miyashita H."/>
            <person name="Page L."/>
            <person name="Ramakrishna P."/>
            <person name="Satoh S."/>
            <person name="Sattley W.M."/>
            <person name="Shimada Y."/>
            <person name="Taylor H.L."/>
            <person name="Tomo T."/>
            <person name="Tsuchiya T."/>
            <person name="Wang Z.T."/>
            <person name="Raymond J."/>
            <person name="Mimuro M."/>
            <person name="Blankenship R.E."/>
            <person name="Touchman J.W."/>
        </authorList>
    </citation>
    <scope>NUCLEOTIDE SEQUENCE [LARGE SCALE GENOMIC DNA]</scope>
    <source>
        <strain>MBIC 11017</strain>
    </source>
</reference>
<organism>
    <name type="scientific">Acaryochloris marina (strain MBIC 11017)</name>
    <dbReference type="NCBI Taxonomy" id="329726"/>
    <lineage>
        <taxon>Bacteria</taxon>
        <taxon>Bacillati</taxon>
        <taxon>Cyanobacteriota</taxon>
        <taxon>Cyanophyceae</taxon>
        <taxon>Acaryochloridales</taxon>
        <taxon>Acaryochloridaceae</taxon>
        <taxon>Acaryochloris</taxon>
    </lineage>
</organism>
<keyword id="KW-0963">Cytoplasm</keyword>
<keyword id="KW-0378">Hydrolase</keyword>
<keyword id="KW-1185">Reference proteome</keyword>
<sequence>MIPGELFPETGDIELNAGRATVKVAVANTGDRPVQVGSHFHFYEVNPALAFDRAQVKGMRLDIPAGTAVRFEPGDQREVTLVPLVGQRQVFGFNGKIQGAL</sequence>
<evidence type="ECO:0000255" key="1">
    <source>
        <dbReference type="HAMAP-Rule" id="MF_01954"/>
    </source>
</evidence>
<name>URE2_ACAM1</name>
<comment type="catalytic activity">
    <reaction evidence="1">
        <text>urea + 2 H2O + H(+) = hydrogencarbonate + 2 NH4(+)</text>
        <dbReference type="Rhea" id="RHEA:20557"/>
        <dbReference type="ChEBI" id="CHEBI:15377"/>
        <dbReference type="ChEBI" id="CHEBI:15378"/>
        <dbReference type="ChEBI" id="CHEBI:16199"/>
        <dbReference type="ChEBI" id="CHEBI:17544"/>
        <dbReference type="ChEBI" id="CHEBI:28938"/>
        <dbReference type="EC" id="3.5.1.5"/>
    </reaction>
</comment>
<comment type="pathway">
    <text evidence="1">Nitrogen metabolism; urea degradation; CO(2) and NH(3) from urea (urease route): step 1/1.</text>
</comment>
<comment type="subunit">
    <text evidence="1">Heterotrimer of UreA (gamma), UreB (beta) and UreC (alpha) subunits. Three heterotrimers associate to form the active enzyme.</text>
</comment>
<comment type="subcellular location">
    <subcellularLocation>
        <location evidence="1">Cytoplasm</location>
    </subcellularLocation>
</comment>
<comment type="similarity">
    <text evidence="1">Belongs to the urease beta subunit family.</text>
</comment>
<gene>
    <name evidence="1" type="primary">ureB</name>
    <name type="ordered locus">AM1_5106</name>
</gene>
<proteinExistence type="inferred from homology"/>
<dbReference type="EC" id="3.5.1.5" evidence="1"/>
<dbReference type="EMBL" id="CP000828">
    <property type="protein sequence ID" value="ABW30070.1"/>
    <property type="molecule type" value="Genomic_DNA"/>
</dbReference>
<dbReference type="RefSeq" id="WP_012165337.1">
    <property type="nucleotide sequence ID" value="NC_009925.1"/>
</dbReference>
<dbReference type="SMR" id="B0C793"/>
<dbReference type="STRING" id="329726.AM1_5106"/>
<dbReference type="KEGG" id="amr:AM1_5106"/>
<dbReference type="eggNOG" id="COG0832">
    <property type="taxonomic scope" value="Bacteria"/>
</dbReference>
<dbReference type="HOGENOM" id="CLU_129707_1_1_3"/>
<dbReference type="OrthoDB" id="9797217at2"/>
<dbReference type="UniPathway" id="UPA00258">
    <property type="reaction ID" value="UER00370"/>
</dbReference>
<dbReference type="Proteomes" id="UP000000268">
    <property type="component" value="Chromosome"/>
</dbReference>
<dbReference type="GO" id="GO:0035550">
    <property type="term" value="C:urease complex"/>
    <property type="evidence" value="ECO:0007669"/>
    <property type="project" value="InterPro"/>
</dbReference>
<dbReference type="GO" id="GO:0009039">
    <property type="term" value="F:urease activity"/>
    <property type="evidence" value="ECO:0007669"/>
    <property type="project" value="UniProtKB-UniRule"/>
</dbReference>
<dbReference type="GO" id="GO:0043419">
    <property type="term" value="P:urea catabolic process"/>
    <property type="evidence" value="ECO:0007669"/>
    <property type="project" value="UniProtKB-UniRule"/>
</dbReference>
<dbReference type="CDD" id="cd00407">
    <property type="entry name" value="Urease_beta"/>
    <property type="match status" value="1"/>
</dbReference>
<dbReference type="FunFam" id="2.10.150.10:FF:000001">
    <property type="entry name" value="Urease subunit beta"/>
    <property type="match status" value="1"/>
</dbReference>
<dbReference type="Gene3D" id="2.10.150.10">
    <property type="entry name" value="Urease, beta subunit"/>
    <property type="match status" value="1"/>
</dbReference>
<dbReference type="HAMAP" id="MF_01954">
    <property type="entry name" value="Urease_beta"/>
    <property type="match status" value="1"/>
</dbReference>
<dbReference type="InterPro" id="IPR002019">
    <property type="entry name" value="Urease_beta-like"/>
</dbReference>
<dbReference type="InterPro" id="IPR036461">
    <property type="entry name" value="Urease_betasu_sf"/>
</dbReference>
<dbReference type="InterPro" id="IPR050069">
    <property type="entry name" value="Urease_subunit"/>
</dbReference>
<dbReference type="NCBIfam" id="NF009682">
    <property type="entry name" value="PRK13203.1"/>
    <property type="match status" value="1"/>
</dbReference>
<dbReference type="NCBIfam" id="TIGR00192">
    <property type="entry name" value="urease_beta"/>
    <property type="match status" value="1"/>
</dbReference>
<dbReference type="PANTHER" id="PTHR33569">
    <property type="entry name" value="UREASE"/>
    <property type="match status" value="1"/>
</dbReference>
<dbReference type="PANTHER" id="PTHR33569:SF1">
    <property type="entry name" value="UREASE"/>
    <property type="match status" value="1"/>
</dbReference>
<dbReference type="Pfam" id="PF00699">
    <property type="entry name" value="Urease_beta"/>
    <property type="match status" value="1"/>
</dbReference>
<dbReference type="SUPFAM" id="SSF51278">
    <property type="entry name" value="Urease, beta-subunit"/>
    <property type="match status" value="1"/>
</dbReference>